<comment type="subcellular location">
    <subcellularLocation>
        <location evidence="1">Mitochondrion intermembrane space</location>
    </subcellularLocation>
    <text evidence="1">Imported into the mitochondria via the mitochondrial disulfide relay system.</text>
</comment>
<comment type="domain">
    <text evidence="1">The twin Cx9C motifs are involved in the recognition by the mitochondrial disulfide relay system.</text>
</comment>
<comment type="similarity">
    <text evidence="3">Belongs to the CMC4 family.</text>
</comment>
<feature type="chain" id="PRO_0000408581" description="Cx9C motif-containing protein 4, mitochondrial">
    <location>
        <begin position="1"/>
        <end position="73"/>
    </location>
</feature>
<feature type="domain" description="CHCH" evidence="2">
    <location>
        <begin position="2"/>
        <end position="44"/>
    </location>
</feature>
<feature type="short sequence motif" description="Cx9C motif 1" evidence="2">
    <location>
        <begin position="5"/>
        <end position="15"/>
    </location>
</feature>
<feature type="short sequence motif" description="Cx9C motif 2" evidence="2">
    <location>
        <begin position="26"/>
        <end position="36"/>
    </location>
</feature>
<feature type="disulfide bond" evidence="2">
    <location>
        <begin position="5"/>
        <end position="36"/>
    </location>
</feature>
<feature type="disulfide bond" evidence="2">
    <location>
        <begin position="15"/>
        <end position="26"/>
    </location>
</feature>
<name>CMC4_YEAS8</name>
<keyword id="KW-1015">Disulfide bond</keyword>
<keyword id="KW-0496">Mitochondrion</keyword>
<keyword id="KW-0677">Repeat</keyword>
<reference key="1">
    <citation type="journal article" date="2009" name="Proc. Natl. Acad. Sci. U.S.A.">
        <title>Eukaryote-to-eukaryote gene transfer events revealed by the genome sequence of the wine yeast Saccharomyces cerevisiae EC1118.</title>
        <authorList>
            <person name="Novo M."/>
            <person name="Bigey F."/>
            <person name="Beyne E."/>
            <person name="Galeote V."/>
            <person name="Gavory F."/>
            <person name="Mallet S."/>
            <person name="Cambon B."/>
            <person name="Legras J.-L."/>
            <person name="Wincker P."/>
            <person name="Casaregola S."/>
            <person name="Dequin S."/>
        </authorList>
    </citation>
    <scope>NUCLEOTIDE SEQUENCE [LARGE SCALE GENOMIC DNA]</scope>
    <source>
        <strain>Lalvin EC1118 / Prise de mousse</strain>
    </source>
</reference>
<organism>
    <name type="scientific">Saccharomyces cerevisiae (strain Lalvin EC1118 / Prise de mousse)</name>
    <name type="common">Baker's yeast</name>
    <dbReference type="NCBI Taxonomy" id="643680"/>
    <lineage>
        <taxon>Eukaryota</taxon>
        <taxon>Fungi</taxon>
        <taxon>Dikarya</taxon>
        <taxon>Ascomycota</taxon>
        <taxon>Saccharomycotina</taxon>
        <taxon>Saccharomycetes</taxon>
        <taxon>Saccharomycetales</taxon>
        <taxon>Saccharomycetaceae</taxon>
        <taxon>Saccharomyces</taxon>
    </lineage>
</organism>
<evidence type="ECO:0000250" key="1"/>
<evidence type="ECO:0000255" key="2">
    <source>
        <dbReference type="PROSITE-ProRule" id="PRU01150"/>
    </source>
</evidence>
<evidence type="ECO:0000305" key="3"/>
<accession>C8ZF59</accession>
<protein>
    <recommendedName>
        <fullName>Cx9C motif-containing protein 4, mitochondrial</fullName>
    </recommendedName>
</protein>
<proteinExistence type="inferred from homology"/>
<sequence length="73" mass="8217">MSNPCQKEACAIQDCLLSHQYDDAKCAKVIDQLYICCSKFYKDNGKDSRSPCCPLPSLLELKMKQRKLTPGDS</sequence>
<gene>
    <name type="primary">CMC4</name>
    <name type="ORF">EC1118_1M3_3895g</name>
</gene>
<dbReference type="EMBL" id="FN393082">
    <property type="protein sequence ID" value="CAY82025.1"/>
    <property type="molecule type" value="Genomic_DNA"/>
</dbReference>
<dbReference type="SMR" id="C8ZF59"/>
<dbReference type="HOGENOM" id="CLU_177210_0_0_1"/>
<dbReference type="OrthoDB" id="23752at4893"/>
<dbReference type="Proteomes" id="UP000000286">
    <property type="component" value="Chromosome XIII, Scaffold EC1118_1M3"/>
</dbReference>
<dbReference type="GO" id="GO:0005758">
    <property type="term" value="C:mitochondrial intermembrane space"/>
    <property type="evidence" value="ECO:0007669"/>
    <property type="project" value="UniProtKB-SubCell"/>
</dbReference>
<dbReference type="FunFam" id="1.10.287.1130:FF:000008">
    <property type="entry name" value="Cx9C motif-containing protein 4, mitochondrial"/>
    <property type="match status" value="1"/>
</dbReference>
<dbReference type="Gene3D" id="1.10.287.1130">
    <property type="entry name" value="CytochromE C oxidase copper chaperone"/>
    <property type="match status" value="1"/>
</dbReference>
<dbReference type="InterPro" id="IPR027179">
    <property type="entry name" value="CMC4"/>
</dbReference>
<dbReference type="InterPro" id="IPR009069">
    <property type="entry name" value="Cys_alpha_HP_mot_SF"/>
</dbReference>
<dbReference type="PANTHER" id="PTHR15590">
    <property type="entry name" value="CX9C MOTIF-CONTAINING PROTEIN 4"/>
    <property type="match status" value="1"/>
</dbReference>
<dbReference type="PANTHER" id="PTHR15590:SF0">
    <property type="entry name" value="CX9C MOTIF-CONTAINING PROTEIN 4"/>
    <property type="match status" value="1"/>
</dbReference>
<dbReference type="Pfam" id="PF08991">
    <property type="entry name" value="CMC4"/>
    <property type="match status" value="1"/>
</dbReference>
<dbReference type="SUPFAM" id="SSF47072">
    <property type="entry name" value="Cysteine alpha-hairpin motif"/>
    <property type="match status" value="1"/>
</dbReference>
<dbReference type="PROSITE" id="PS51808">
    <property type="entry name" value="CHCH"/>
    <property type="match status" value="1"/>
</dbReference>